<accession>A1VF83</accession>
<feature type="chain" id="PRO_1000065902" description="Orotidine 5'-phosphate decarboxylase">
    <location>
        <begin position="1"/>
        <end position="235"/>
    </location>
</feature>
<feature type="active site" description="Proton donor" evidence="1">
    <location>
        <position position="60"/>
    </location>
</feature>
<feature type="binding site" evidence="1">
    <location>
        <position position="9"/>
    </location>
    <ligand>
        <name>substrate</name>
    </ligand>
</feature>
<feature type="binding site" evidence="1">
    <location>
        <position position="31"/>
    </location>
    <ligand>
        <name>substrate</name>
    </ligand>
</feature>
<feature type="binding site" evidence="1">
    <location>
        <begin position="58"/>
        <end position="67"/>
    </location>
    <ligand>
        <name>substrate</name>
    </ligand>
</feature>
<feature type="binding site" evidence="1">
    <location>
        <position position="121"/>
    </location>
    <ligand>
        <name>substrate</name>
    </ligand>
</feature>
<feature type="binding site" evidence="1">
    <location>
        <position position="180"/>
    </location>
    <ligand>
        <name>substrate</name>
    </ligand>
</feature>
<feature type="binding site" evidence="1">
    <location>
        <position position="190"/>
    </location>
    <ligand>
        <name>substrate</name>
    </ligand>
</feature>
<feature type="binding site" evidence="1">
    <location>
        <position position="210"/>
    </location>
    <ligand>
        <name>substrate</name>
    </ligand>
</feature>
<feature type="binding site" evidence="1">
    <location>
        <position position="211"/>
    </location>
    <ligand>
        <name>substrate</name>
    </ligand>
</feature>
<protein>
    <recommendedName>
        <fullName evidence="1">Orotidine 5'-phosphate decarboxylase</fullName>
        <ecNumber evidence="1">4.1.1.23</ecNumber>
    </recommendedName>
    <alternativeName>
        <fullName evidence="1">OMP decarboxylase</fullName>
        <shortName evidence="1">OMPDCase</shortName>
        <shortName evidence="1">OMPdecase</shortName>
    </alternativeName>
</protein>
<reference key="1">
    <citation type="journal article" date="2009" name="Environ. Microbiol.">
        <title>Contribution of mobile genetic elements to Desulfovibrio vulgaris genome plasticity.</title>
        <authorList>
            <person name="Walker C.B."/>
            <person name="Stolyar S."/>
            <person name="Chivian D."/>
            <person name="Pinel N."/>
            <person name="Gabster J.A."/>
            <person name="Dehal P.S."/>
            <person name="He Z."/>
            <person name="Yang Z.K."/>
            <person name="Yen H.C."/>
            <person name="Zhou J."/>
            <person name="Wall J.D."/>
            <person name="Hazen T.C."/>
            <person name="Arkin A.P."/>
            <person name="Stahl D.A."/>
        </authorList>
    </citation>
    <scope>NUCLEOTIDE SEQUENCE [LARGE SCALE GENOMIC DNA]</scope>
    <source>
        <strain>DP4</strain>
    </source>
</reference>
<keyword id="KW-0210">Decarboxylase</keyword>
<keyword id="KW-0456">Lyase</keyword>
<keyword id="KW-0665">Pyrimidine biosynthesis</keyword>
<name>PYRF_NITV4</name>
<sequence>MAELVVALDFPAADVAVDMAGRLRGTAPWMKVGLELFCAAGPDVVRAVADLGFRVFLDLKFHDIPNTVRGAVRSAVRSGADMVNIHLMGGERMARAAVEGLHEGAQTTGSVPLLFGVTVLTSTAQGELPGISTDIGEYAASLAASGAAWGLNGVVCSGYEVESIKKRCGASFLCLTPGIRPGGGAGGDDQRRVMTPAQAVSAGSDYLVVGRPVTGAADPAAAARAIMAEMAAVRR</sequence>
<comment type="function">
    <text evidence="1">Catalyzes the decarboxylation of orotidine 5'-monophosphate (OMP) to uridine 5'-monophosphate (UMP).</text>
</comment>
<comment type="catalytic activity">
    <reaction evidence="1">
        <text>orotidine 5'-phosphate + H(+) = UMP + CO2</text>
        <dbReference type="Rhea" id="RHEA:11596"/>
        <dbReference type="ChEBI" id="CHEBI:15378"/>
        <dbReference type="ChEBI" id="CHEBI:16526"/>
        <dbReference type="ChEBI" id="CHEBI:57538"/>
        <dbReference type="ChEBI" id="CHEBI:57865"/>
        <dbReference type="EC" id="4.1.1.23"/>
    </reaction>
</comment>
<comment type="pathway">
    <text evidence="1">Pyrimidine metabolism; UMP biosynthesis via de novo pathway; UMP from orotate: step 2/2.</text>
</comment>
<comment type="subunit">
    <text evidence="1">Homodimer.</text>
</comment>
<comment type="similarity">
    <text evidence="1">Belongs to the OMP decarboxylase family. Type 1 subfamily.</text>
</comment>
<gene>
    <name evidence="1" type="primary">pyrF</name>
    <name type="ordered locus">Dvul_2083</name>
</gene>
<dbReference type="EC" id="4.1.1.23" evidence="1"/>
<dbReference type="EMBL" id="CP000527">
    <property type="protein sequence ID" value="ABM29099.1"/>
    <property type="molecule type" value="Genomic_DNA"/>
</dbReference>
<dbReference type="RefSeq" id="WP_010938200.1">
    <property type="nucleotide sequence ID" value="NC_008751.1"/>
</dbReference>
<dbReference type="SMR" id="A1VF83"/>
<dbReference type="KEGG" id="dvl:Dvul_2083"/>
<dbReference type="HOGENOM" id="CLU_067069_1_1_7"/>
<dbReference type="UniPathway" id="UPA00070">
    <property type="reaction ID" value="UER00120"/>
</dbReference>
<dbReference type="Proteomes" id="UP000009173">
    <property type="component" value="Chromosome"/>
</dbReference>
<dbReference type="GO" id="GO:0005829">
    <property type="term" value="C:cytosol"/>
    <property type="evidence" value="ECO:0007669"/>
    <property type="project" value="TreeGrafter"/>
</dbReference>
<dbReference type="GO" id="GO:0004590">
    <property type="term" value="F:orotidine-5'-phosphate decarboxylase activity"/>
    <property type="evidence" value="ECO:0007669"/>
    <property type="project" value="UniProtKB-UniRule"/>
</dbReference>
<dbReference type="GO" id="GO:0006207">
    <property type="term" value="P:'de novo' pyrimidine nucleobase biosynthetic process"/>
    <property type="evidence" value="ECO:0007669"/>
    <property type="project" value="InterPro"/>
</dbReference>
<dbReference type="GO" id="GO:0044205">
    <property type="term" value="P:'de novo' UMP biosynthetic process"/>
    <property type="evidence" value="ECO:0007669"/>
    <property type="project" value="UniProtKB-UniRule"/>
</dbReference>
<dbReference type="CDD" id="cd04725">
    <property type="entry name" value="OMP_decarboxylase_like"/>
    <property type="match status" value="1"/>
</dbReference>
<dbReference type="FunFam" id="3.20.20.70:FF:000015">
    <property type="entry name" value="Orotidine 5'-phosphate decarboxylase"/>
    <property type="match status" value="1"/>
</dbReference>
<dbReference type="Gene3D" id="3.20.20.70">
    <property type="entry name" value="Aldolase class I"/>
    <property type="match status" value="1"/>
</dbReference>
<dbReference type="HAMAP" id="MF_01200_B">
    <property type="entry name" value="OMPdecase_type1_B"/>
    <property type="match status" value="1"/>
</dbReference>
<dbReference type="InterPro" id="IPR013785">
    <property type="entry name" value="Aldolase_TIM"/>
</dbReference>
<dbReference type="InterPro" id="IPR014732">
    <property type="entry name" value="OMPdecase"/>
</dbReference>
<dbReference type="InterPro" id="IPR018089">
    <property type="entry name" value="OMPdecase_AS"/>
</dbReference>
<dbReference type="InterPro" id="IPR047596">
    <property type="entry name" value="OMPdecase_bac"/>
</dbReference>
<dbReference type="InterPro" id="IPR001754">
    <property type="entry name" value="OMPdeCOase_dom"/>
</dbReference>
<dbReference type="InterPro" id="IPR011060">
    <property type="entry name" value="RibuloseP-bd_barrel"/>
</dbReference>
<dbReference type="NCBIfam" id="NF001273">
    <property type="entry name" value="PRK00230.1"/>
    <property type="match status" value="1"/>
</dbReference>
<dbReference type="NCBIfam" id="TIGR01740">
    <property type="entry name" value="pyrF"/>
    <property type="match status" value="1"/>
</dbReference>
<dbReference type="PANTHER" id="PTHR32119">
    <property type="entry name" value="OROTIDINE 5'-PHOSPHATE DECARBOXYLASE"/>
    <property type="match status" value="1"/>
</dbReference>
<dbReference type="PANTHER" id="PTHR32119:SF2">
    <property type="entry name" value="OROTIDINE 5'-PHOSPHATE DECARBOXYLASE"/>
    <property type="match status" value="1"/>
</dbReference>
<dbReference type="Pfam" id="PF00215">
    <property type="entry name" value="OMPdecase"/>
    <property type="match status" value="1"/>
</dbReference>
<dbReference type="SMART" id="SM00934">
    <property type="entry name" value="OMPdecase"/>
    <property type="match status" value="1"/>
</dbReference>
<dbReference type="SUPFAM" id="SSF51366">
    <property type="entry name" value="Ribulose-phoshate binding barrel"/>
    <property type="match status" value="1"/>
</dbReference>
<dbReference type="PROSITE" id="PS00156">
    <property type="entry name" value="OMPDECASE"/>
    <property type="match status" value="1"/>
</dbReference>
<evidence type="ECO:0000255" key="1">
    <source>
        <dbReference type="HAMAP-Rule" id="MF_01200"/>
    </source>
</evidence>
<proteinExistence type="inferred from homology"/>
<organism>
    <name type="scientific">Nitratidesulfovibrio vulgaris (strain DP4)</name>
    <name type="common">Desulfovibrio vulgaris</name>
    <dbReference type="NCBI Taxonomy" id="391774"/>
    <lineage>
        <taxon>Bacteria</taxon>
        <taxon>Pseudomonadati</taxon>
        <taxon>Thermodesulfobacteriota</taxon>
        <taxon>Desulfovibrionia</taxon>
        <taxon>Desulfovibrionales</taxon>
        <taxon>Desulfovibrionaceae</taxon>
        <taxon>Nitratidesulfovibrio</taxon>
    </lineage>
</organism>